<accession>Q6A553</accession>
<organism>
    <name type="scientific">Comamonas testosteroni</name>
    <name type="common">Pseudomonas testosteroni</name>
    <dbReference type="NCBI Taxonomy" id="285"/>
    <lineage>
        <taxon>Bacteria</taxon>
        <taxon>Pseudomonadati</taxon>
        <taxon>Pseudomonadota</taxon>
        <taxon>Betaproteobacteria</taxon>
        <taxon>Burkholderiales</taxon>
        <taxon>Comamonadaceae</taxon>
        <taxon>Comamonas</taxon>
    </lineage>
</organism>
<protein>
    <recommendedName>
        <fullName>Probable inner membrane transporter protein TsaS</fullName>
    </recommendedName>
</protein>
<comment type="function">
    <text evidence="2">Involved in the uptake of p-toluenesulphonate (TSA).</text>
</comment>
<comment type="subunit">
    <text evidence="4">Part of a two-component transport system composed of TsaT and TsaS.</text>
</comment>
<comment type="subcellular location">
    <subcellularLocation>
        <location evidence="3">Cell inner membrane</location>
        <topology evidence="3">Multi-pass membrane protein</topology>
    </subcellularLocation>
</comment>
<comment type="induction">
    <text evidence="2">Constitutively expressed.</text>
</comment>
<comment type="similarity">
    <text evidence="3">Belongs to the 4-toluene sulfonate uptake permease (TSUP) (TC 2.A.102) family.</text>
</comment>
<name>TSAS_COMTE</name>
<evidence type="ECO:0000255" key="1"/>
<evidence type="ECO:0000269" key="2">
    <source>
    </source>
</evidence>
<evidence type="ECO:0000305" key="3"/>
<evidence type="ECO:0000305" key="4">
    <source>
    </source>
</evidence>
<reference key="1">
    <citation type="journal article" date="2001" name="Appl. Environ. Microbiol.">
        <title>Map of the IncP1beta plasmid pTSA encoding the widespread genes (tsa) for p-toluenesulfonate degradation in Comamonas testosteroni T-2.</title>
        <authorList>
            <person name="Tralau T."/>
            <person name="Cook A.M."/>
            <person name="Ruff J."/>
        </authorList>
    </citation>
    <scope>NUCLEOTIDE SEQUENCE [GENOMIC DNA]</scope>
    <source>
        <strain>DSM 6577 / T-2</strain>
    </source>
</reference>
<reference key="2">
    <citation type="journal article" date="2004" name="Biochem. J.">
        <title>A novel outer-membrane anion channel (porin) as part of a putatively two-component transport system for 4-toluenesulphonate in Comamonas testosteroni T-2.</title>
        <authorList>
            <person name="Mampel J."/>
            <person name="Maier E."/>
            <person name="Tralau T."/>
            <person name="Ruff J."/>
            <person name="Benz R."/>
            <person name="Cook A.M."/>
        </authorList>
    </citation>
    <scope>NUCLEOTIDE SEQUENCE [GENOMIC DNA]</scope>
    <scope>FUNCTION</scope>
    <scope>SUBUNIT</scope>
    <scope>INDUCTION</scope>
    <source>
        <strain>DSM 6577 / T-2</strain>
    </source>
</reference>
<proteinExistence type="evidence at protein level"/>
<geneLocation type="plasmid">
    <name>pTSA</name>
</geneLocation>
<feature type="chain" id="PRO_0000430300" description="Probable inner membrane transporter protein TsaS">
    <location>
        <begin position="1"/>
        <end position="239"/>
    </location>
</feature>
<feature type="transmembrane region" description="Helical" evidence="1">
    <location>
        <begin position="65"/>
        <end position="85"/>
    </location>
</feature>
<feature type="transmembrane region" description="Helical" evidence="1">
    <location>
        <begin position="128"/>
        <end position="148"/>
    </location>
</feature>
<feature type="transmembrane region" description="Helical" evidence="1">
    <location>
        <begin position="160"/>
        <end position="180"/>
    </location>
</feature>
<feature type="transmembrane region" description="Helical" evidence="1">
    <location>
        <begin position="186"/>
        <end position="206"/>
    </location>
</feature>
<sequence length="239" mass="25657">MAVPRQRAAGGLCGDGHHRFWLGPGGGALLAGSGRCRGGGLVILLDVPASMLHGGLNFRQVRWRAIGAILPGMAVGALIGLWLMGQLDKRWPLFLLGLYITWVGWRTLRHGQQAARALPGWTHHAGSGLVGVLEVMFATAGPMVIALLQRRLREVAEIRATVPVVMVVAASIAIAVLFGAGQIDRAHTFERWLVALPIAFMGVVLGNRLARHIPPPAMRRAMAVLLIASGLSLTQHLWR</sequence>
<dbReference type="EMBL" id="AH010657">
    <property type="protein sequence ID" value="AAT81376.1"/>
    <property type="molecule type" value="Genomic_DNA"/>
</dbReference>
<dbReference type="TCDB" id="2.A.102.1.1">
    <property type="family name" value="the 4-toluene sulfonate uptake permease (tsup) family"/>
</dbReference>
<dbReference type="GO" id="GO:0005886">
    <property type="term" value="C:plasma membrane"/>
    <property type="evidence" value="ECO:0007669"/>
    <property type="project" value="UniProtKB-SubCell"/>
</dbReference>
<dbReference type="InterPro" id="IPR002781">
    <property type="entry name" value="TM_pro_TauE-like"/>
</dbReference>
<dbReference type="Pfam" id="PF01925">
    <property type="entry name" value="TauE"/>
    <property type="match status" value="1"/>
</dbReference>
<keyword id="KW-0997">Cell inner membrane</keyword>
<keyword id="KW-1003">Cell membrane</keyword>
<keyword id="KW-0472">Membrane</keyword>
<keyword id="KW-0614">Plasmid</keyword>
<keyword id="KW-0812">Transmembrane</keyword>
<keyword id="KW-1133">Transmembrane helix</keyword>
<keyword id="KW-0813">Transport</keyword>
<gene>
    <name type="primary">tsaS</name>
</gene>